<protein>
    <recommendedName>
        <fullName evidence="4">Photosynthetic reaction center cytochrome c-551</fullName>
        <shortName evidence="4">Cytochrome c551</shortName>
    </recommendedName>
</protein>
<name>CY551_CHLP8</name>
<sequence>MDNKSNGKLIALAIGGAVLMGTLFFLVSFLTGYSPAPNHSAILTPLRSFMGWFLLIFCASLIIMGLGKMSGAISDKWFLSFPLSIFVIVMVMFFSLRFYWEKGRTTTVDGKYIRSVEQLNDFLNKPAATSDLPPVPADFDFAAAEKLTDAKCNKCHTLGSVADLFRTKYKKTGQVKLIVKRMQGFPGANISDDEVIEIGTWLQEKF</sequence>
<keyword id="KW-0997">Cell inner membrane</keyword>
<keyword id="KW-1003">Cell membrane</keyword>
<keyword id="KW-0903">Direct protein sequencing</keyword>
<keyword id="KW-0249">Electron transport</keyword>
<keyword id="KW-0349">Heme</keyword>
<keyword id="KW-0408">Iron</keyword>
<keyword id="KW-0472">Membrane</keyword>
<keyword id="KW-0479">Metal-binding</keyword>
<keyword id="KW-0602">Photosynthesis</keyword>
<keyword id="KW-0674">Reaction center</keyword>
<keyword id="KW-0812">Transmembrane</keyword>
<keyword id="KW-1133">Transmembrane helix</keyword>
<keyword id="KW-0813">Transport</keyword>
<evidence type="ECO:0000250" key="1">
    <source>
        <dbReference type="UniProtKB" id="O07091"/>
    </source>
</evidence>
<evidence type="ECO:0000255" key="2"/>
<evidence type="ECO:0000269" key="3">
    <source>
    </source>
</evidence>
<evidence type="ECO:0000303" key="4">
    <source>
    </source>
</evidence>
<evidence type="ECO:0000305" key="5"/>
<organism>
    <name type="scientific">Chlorobaculum parvum (strain DSM 263 / NCIMB 8327)</name>
    <name type="common">Chlorobium vibrioforme subsp. thiosulfatophilum</name>
    <dbReference type="NCBI Taxonomy" id="517417"/>
    <lineage>
        <taxon>Bacteria</taxon>
        <taxon>Pseudomonadati</taxon>
        <taxon>Chlorobiota</taxon>
        <taxon>Chlorobiia</taxon>
        <taxon>Chlorobiales</taxon>
        <taxon>Chlorobiaceae</taxon>
        <taxon>Chlorobaculum</taxon>
    </lineage>
</organism>
<feature type="chain" id="PRO_0000351515" description="Photosynthetic reaction center cytochrome c-551">
    <location>
        <begin position="1"/>
        <end position="206"/>
    </location>
</feature>
<feature type="transmembrane region" description="Helical" evidence="2">
    <location>
        <begin position="10"/>
        <end position="30"/>
    </location>
</feature>
<feature type="transmembrane region" description="Helical" evidence="2">
    <location>
        <begin position="49"/>
        <end position="69"/>
    </location>
</feature>
<feature type="transmembrane region" description="Helical" evidence="2">
    <location>
        <begin position="76"/>
        <end position="96"/>
    </location>
</feature>
<feature type="binding site" description="covalent" evidence="1">
    <location>
        <position position="152"/>
    </location>
    <ligand>
        <name>heme</name>
        <dbReference type="ChEBI" id="CHEBI:30413"/>
    </ligand>
</feature>
<feature type="binding site" description="covalent" evidence="1">
    <location>
        <position position="155"/>
    </location>
    <ligand>
        <name>heme</name>
        <dbReference type="ChEBI" id="CHEBI:30413"/>
    </ligand>
</feature>
<feature type="binding site" description="axial binding residue" evidence="1">
    <location>
        <position position="156"/>
    </location>
    <ligand>
        <name>heme</name>
        <dbReference type="ChEBI" id="CHEBI:30413"/>
    </ligand>
    <ligandPart>
        <name>Fe</name>
        <dbReference type="ChEBI" id="CHEBI:18248"/>
    </ligandPart>
</feature>
<feature type="binding site" description="axial binding residue" evidence="1">
    <location>
        <position position="182"/>
    </location>
    <ligand>
        <name>heme</name>
        <dbReference type="ChEBI" id="CHEBI:30413"/>
    </ligand>
    <ligandPart>
        <name>Fe</name>
        <dbReference type="ChEBI" id="CHEBI:18248"/>
    </ligandPart>
</feature>
<accession>B3QM18</accession>
<accession>P42426</accession>
<reference key="1">
    <citation type="journal article" date="1992" name="J. Biol. Chem.">
        <title>A membrane-bound monoheme cytochrome c551 of a novel type is the immediate electron donor to P840 of the Chlorobium vibrioforme photosynthetic reaction center complex.</title>
        <authorList>
            <person name="Okkels J.S."/>
            <person name="Kjaer B."/>
            <person name="Hansson O."/>
            <person name="Svendsen I."/>
            <person name="Moeller B.L."/>
            <person name="Scheller H.V."/>
        </authorList>
    </citation>
    <scope>NUCLEOTIDE SEQUENCE [GENOMIC DNA]</scope>
    <scope>PROTEIN SEQUENCE OF 1-33</scope>
    <scope>FUNCTION</scope>
    <scope>PTM</scope>
</reference>
<reference key="2">
    <citation type="submission" date="2008-06" db="EMBL/GenBank/DDBJ databases">
        <title>Complete sequence of Chlorobaculum parvum NCIB 8327.</title>
        <authorList>
            <consortium name="US DOE Joint Genome Institute"/>
            <person name="Lucas S."/>
            <person name="Copeland A."/>
            <person name="Lapidus A."/>
            <person name="Glavina del Rio T."/>
            <person name="Dalin E."/>
            <person name="Tice H."/>
            <person name="Bruce D."/>
            <person name="Goodwin L."/>
            <person name="Pitluck S."/>
            <person name="Schmutz J."/>
            <person name="Larimer F."/>
            <person name="Land M."/>
            <person name="Hauser L."/>
            <person name="Kyrpides N."/>
            <person name="Mikhailova N."/>
            <person name="Zhao F."/>
            <person name="Li T."/>
            <person name="Liu Z."/>
            <person name="Overmann J."/>
            <person name="Bryant D.A."/>
            <person name="Richardson P."/>
        </authorList>
    </citation>
    <scope>NUCLEOTIDE SEQUENCE [LARGE SCALE GENOMIC DNA]</scope>
    <source>
        <strain>DSM 263 / NCIMB 8327</strain>
    </source>
</reference>
<comment type="function">
    <text evidence="3">Monoheme cytochrome which is the immediate electron donor to P840 of the photosynthetic reaction center complex.</text>
</comment>
<comment type="subunit">
    <text evidence="1">Component of the photosynthetic reaction center. The reaction center interacts with the Fenna-Matthews-Olson (FMO, fmoA) complex.</text>
</comment>
<comment type="subcellular location">
    <subcellularLocation>
        <location evidence="1">Cell inner membrane</location>
        <topology evidence="5">Multi-pass membrane protein</topology>
    </subcellularLocation>
</comment>
<comment type="PTM">
    <text evidence="3">Binds 1 heme group per subunit.</text>
</comment>
<dbReference type="EMBL" id="M95751">
    <property type="protein sequence ID" value="AAA23110.1"/>
    <property type="molecule type" value="Genomic_DNA"/>
</dbReference>
<dbReference type="EMBL" id="CP001099">
    <property type="protein sequence ID" value="ACF10971.1"/>
    <property type="molecule type" value="Genomic_DNA"/>
</dbReference>
<dbReference type="PIR" id="A45079">
    <property type="entry name" value="A45079"/>
</dbReference>
<dbReference type="RefSeq" id="WP_012501804.1">
    <property type="nucleotide sequence ID" value="NC_011027.1"/>
</dbReference>
<dbReference type="SMR" id="B3QM18"/>
<dbReference type="STRING" id="517417.Cpar_0549"/>
<dbReference type="KEGG" id="cpc:Cpar_0549"/>
<dbReference type="eggNOG" id="COG3245">
    <property type="taxonomic scope" value="Bacteria"/>
</dbReference>
<dbReference type="HOGENOM" id="CLU_1293374_0_0_10"/>
<dbReference type="OrthoDB" id="594564at2"/>
<dbReference type="Proteomes" id="UP000008811">
    <property type="component" value="Chromosome"/>
</dbReference>
<dbReference type="GO" id="GO:0005886">
    <property type="term" value="C:plasma membrane"/>
    <property type="evidence" value="ECO:0007669"/>
    <property type="project" value="UniProtKB-SubCell"/>
</dbReference>
<dbReference type="GO" id="GO:0009055">
    <property type="term" value="F:electron transfer activity"/>
    <property type="evidence" value="ECO:0007669"/>
    <property type="project" value="InterPro"/>
</dbReference>
<dbReference type="GO" id="GO:0020037">
    <property type="term" value="F:heme binding"/>
    <property type="evidence" value="ECO:0007669"/>
    <property type="project" value="InterPro"/>
</dbReference>
<dbReference type="GO" id="GO:0046872">
    <property type="term" value="F:metal ion binding"/>
    <property type="evidence" value="ECO:0007669"/>
    <property type="project" value="UniProtKB-KW"/>
</dbReference>
<dbReference type="GO" id="GO:0015979">
    <property type="term" value="P:photosynthesis"/>
    <property type="evidence" value="ECO:0007669"/>
    <property type="project" value="UniProtKB-KW"/>
</dbReference>
<dbReference type="Gene3D" id="1.10.760.10">
    <property type="entry name" value="Cytochrome c-like domain"/>
    <property type="match status" value="1"/>
</dbReference>
<dbReference type="InterPro" id="IPR036909">
    <property type="entry name" value="Cyt_c-like_dom_sf"/>
</dbReference>
<dbReference type="InterPro" id="IPR019604">
    <property type="entry name" value="Cytochrome-c551"/>
</dbReference>
<dbReference type="Pfam" id="PF10643">
    <property type="entry name" value="Cytochrome-c551"/>
    <property type="match status" value="1"/>
</dbReference>
<dbReference type="PIRSF" id="PIRSF000009">
    <property type="entry name" value="Cytochrome_c551"/>
    <property type="match status" value="1"/>
</dbReference>
<dbReference type="SUPFAM" id="SSF46626">
    <property type="entry name" value="Cytochrome c"/>
    <property type="match status" value="1"/>
</dbReference>
<proteinExistence type="evidence at protein level"/>
<gene>
    <name type="primary">pscC</name>
    <name evidence="4" type="synonym">cycA</name>
    <name type="ordered locus">Cpar_0549</name>
</gene>